<gene>
    <name evidence="1" type="primary">queG</name>
    <name type="ordered locus">sll1348</name>
</gene>
<accession>P73526</accession>
<protein>
    <recommendedName>
        <fullName evidence="1">Epoxyqueuosine reductase</fullName>
        <ecNumber evidence="1">1.17.99.6</ecNumber>
    </recommendedName>
    <alternativeName>
        <fullName evidence="1">Queuosine biosynthesis protein QueG</fullName>
    </alternativeName>
</protein>
<feature type="chain" id="PRO_0000416085" description="Epoxyqueuosine reductase">
    <location>
        <begin position="1"/>
        <end position="289"/>
    </location>
</feature>
<feature type="domain" description="4Fe-4S ferredoxin-type" evidence="1">
    <location>
        <begin position="156"/>
        <end position="185"/>
    </location>
</feature>
<feature type="active site" description="Proton donor" evidence="1">
    <location>
        <position position="111"/>
    </location>
</feature>
<feature type="binding site" evidence="1">
    <location>
        <position position="165"/>
    </location>
    <ligand>
        <name>[4Fe-4S] cluster</name>
        <dbReference type="ChEBI" id="CHEBI:49883"/>
        <label>1</label>
    </ligand>
</feature>
<feature type="binding site" evidence="1">
    <location>
        <position position="168"/>
    </location>
    <ligand>
        <name>[4Fe-4S] cluster</name>
        <dbReference type="ChEBI" id="CHEBI:49883"/>
        <label>1</label>
    </ligand>
</feature>
<feature type="binding site" evidence="1">
    <location>
        <position position="171"/>
    </location>
    <ligand>
        <name>[4Fe-4S] cluster</name>
        <dbReference type="ChEBI" id="CHEBI:49883"/>
        <label>1</label>
    </ligand>
</feature>
<feature type="binding site" evidence="1">
    <location>
        <position position="175"/>
    </location>
    <ligand>
        <name>[4Fe-4S] cluster</name>
        <dbReference type="ChEBI" id="CHEBI:49883"/>
        <label>2</label>
    </ligand>
</feature>
<feature type="binding site" evidence="1">
    <location>
        <position position="191"/>
    </location>
    <ligand>
        <name>[4Fe-4S] cluster</name>
        <dbReference type="ChEBI" id="CHEBI:49883"/>
        <label>2</label>
    </ligand>
</feature>
<feature type="binding site" evidence="1">
    <location>
        <position position="219"/>
    </location>
    <ligand>
        <name>[4Fe-4S] cluster</name>
        <dbReference type="ChEBI" id="CHEBI:49883"/>
        <label>2</label>
    </ligand>
</feature>
<feature type="binding site" evidence="1">
    <location>
        <position position="222"/>
    </location>
    <ligand>
        <name>[4Fe-4S] cluster</name>
        <dbReference type="ChEBI" id="CHEBI:49883"/>
        <label>2</label>
    </ligand>
</feature>
<feature type="binding site" evidence="1">
    <location>
        <position position="226"/>
    </location>
    <ligand>
        <name>[4Fe-4S] cluster</name>
        <dbReference type="ChEBI" id="CHEBI:49883"/>
        <label>1</label>
    </ligand>
</feature>
<dbReference type="EC" id="1.17.99.6" evidence="1"/>
<dbReference type="EMBL" id="BA000022">
    <property type="protein sequence ID" value="BAA17566.1"/>
    <property type="molecule type" value="Genomic_DNA"/>
</dbReference>
<dbReference type="PIR" id="S77232">
    <property type="entry name" value="S77232"/>
</dbReference>
<dbReference type="SMR" id="P73526"/>
<dbReference type="FunCoup" id="P73526">
    <property type="interactions" value="134"/>
</dbReference>
<dbReference type="STRING" id="1148.gene:10498432"/>
<dbReference type="PaxDb" id="1148-1652646"/>
<dbReference type="EnsemblBacteria" id="BAA17566">
    <property type="protein sequence ID" value="BAA17566"/>
    <property type="gene ID" value="BAA17566"/>
</dbReference>
<dbReference type="KEGG" id="syn:sll1348"/>
<dbReference type="eggNOG" id="COG1600">
    <property type="taxonomic scope" value="Bacteria"/>
</dbReference>
<dbReference type="InParanoid" id="P73526"/>
<dbReference type="PhylomeDB" id="P73526"/>
<dbReference type="UniPathway" id="UPA00392"/>
<dbReference type="Proteomes" id="UP000001425">
    <property type="component" value="Chromosome"/>
</dbReference>
<dbReference type="GO" id="GO:0005737">
    <property type="term" value="C:cytoplasm"/>
    <property type="evidence" value="ECO:0007669"/>
    <property type="project" value="UniProtKB-SubCell"/>
</dbReference>
<dbReference type="GO" id="GO:0051539">
    <property type="term" value="F:4 iron, 4 sulfur cluster binding"/>
    <property type="evidence" value="ECO:0007669"/>
    <property type="project" value="UniProtKB-KW"/>
</dbReference>
<dbReference type="GO" id="GO:0052693">
    <property type="term" value="F:epoxyqueuosine reductase activity"/>
    <property type="evidence" value="ECO:0000318"/>
    <property type="project" value="GO_Central"/>
</dbReference>
<dbReference type="GO" id="GO:0046872">
    <property type="term" value="F:metal ion binding"/>
    <property type="evidence" value="ECO:0007669"/>
    <property type="project" value="UniProtKB-KW"/>
</dbReference>
<dbReference type="GO" id="GO:0008616">
    <property type="term" value="P:queuosine biosynthetic process"/>
    <property type="evidence" value="ECO:0000318"/>
    <property type="project" value="GO_Central"/>
</dbReference>
<dbReference type="GO" id="GO:0006400">
    <property type="term" value="P:tRNA modification"/>
    <property type="evidence" value="ECO:0007669"/>
    <property type="project" value="UniProtKB-UniRule"/>
</dbReference>
<dbReference type="FunFam" id="3.30.70.20:FF:000037">
    <property type="entry name" value="Epoxyqueuosine reductase"/>
    <property type="match status" value="1"/>
</dbReference>
<dbReference type="Gene3D" id="3.30.70.20">
    <property type="match status" value="1"/>
</dbReference>
<dbReference type="HAMAP" id="MF_00916">
    <property type="entry name" value="QueG"/>
    <property type="match status" value="1"/>
</dbReference>
<dbReference type="InterPro" id="IPR017896">
    <property type="entry name" value="4Fe4S_Fe-S-bd"/>
</dbReference>
<dbReference type="InterPro" id="IPR017900">
    <property type="entry name" value="4Fe4S_Fe_S_CS"/>
</dbReference>
<dbReference type="InterPro" id="IPR004453">
    <property type="entry name" value="QueG"/>
</dbReference>
<dbReference type="InterPro" id="IPR013542">
    <property type="entry name" value="QueG_DUF1730"/>
</dbReference>
<dbReference type="NCBIfam" id="TIGR00276">
    <property type="entry name" value="tRNA epoxyqueuosine(34) reductase QueG"/>
    <property type="match status" value="1"/>
</dbReference>
<dbReference type="PANTHER" id="PTHR30002">
    <property type="entry name" value="EPOXYQUEUOSINE REDUCTASE"/>
    <property type="match status" value="1"/>
</dbReference>
<dbReference type="PANTHER" id="PTHR30002:SF4">
    <property type="entry name" value="EPOXYQUEUOSINE REDUCTASE"/>
    <property type="match status" value="1"/>
</dbReference>
<dbReference type="Pfam" id="PF13484">
    <property type="entry name" value="Fer4_16"/>
    <property type="match status" value="1"/>
</dbReference>
<dbReference type="Pfam" id="PF08331">
    <property type="entry name" value="QueG_DUF1730"/>
    <property type="match status" value="1"/>
</dbReference>
<dbReference type="SUPFAM" id="SSF46548">
    <property type="entry name" value="alpha-helical ferredoxin"/>
    <property type="match status" value="1"/>
</dbReference>
<dbReference type="PROSITE" id="PS00198">
    <property type="entry name" value="4FE4S_FER_1"/>
    <property type="match status" value="1"/>
</dbReference>
<dbReference type="PROSITE" id="PS51379">
    <property type="entry name" value="4FE4S_FER_2"/>
    <property type="match status" value="1"/>
</dbReference>
<sequence>MGIAPVSETENDEAAQRLQSWIALGYNADMAWMANPKRQNIRELLPSARSVIAVGLNYYTPHQRSGDPAHGKISRYAWGRDYHRVLTKKLKALNLWLEQQVPDLQSRYYVDTGPIQEKAWAERAGLGWVGKNGNLISRDYGSWLFLGEIVTNITLQGDRPHSQHCGTCTRCLEACPTQAIVEPFVVDSNKCIAYHTIENRAEILPTAIADNLQGWVAGCDICQDVCPWNQRFAQPTDVADFDPYEGNLNPELETLANITEADWQQQFTASALRRIKPAMLRRNAQANLQ</sequence>
<comment type="function">
    <text evidence="1">Catalyzes the conversion of epoxyqueuosine (oQ) to queuosine (Q), which is a hypermodified base found in the wobble positions of tRNA(Asp), tRNA(Asn), tRNA(His) and tRNA(Tyr).</text>
</comment>
<comment type="catalytic activity">
    <reaction evidence="1">
        <text>epoxyqueuosine(34) in tRNA + AH2 = queuosine(34) in tRNA + A + H2O</text>
        <dbReference type="Rhea" id="RHEA:32159"/>
        <dbReference type="Rhea" id="RHEA-COMP:18571"/>
        <dbReference type="Rhea" id="RHEA-COMP:18582"/>
        <dbReference type="ChEBI" id="CHEBI:13193"/>
        <dbReference type="ChEBI" id="CHEBI:15377"/>
        <dbReference type="ChEBI" id="CHEBI:17499"/>
        <dbReference type="ChEBI" id="CHEBI:194431"/>
        <dbReference type="ChEBI" id="CHEBI:194443"/>
        <dbReference type="EC" id="1.17.99.6"/>
    </reaction>
</comment>
<comment type="cofactor">
    <cofactor evidence="1">
        <name>cob(II)alamin</name>
        <dbReference type="ChEBI" id="CHEBI:16304"/>
    </cofactor>
</comment>
<comment type="cofactor">
    <cofactor evidence="1">
        <name>[4Fe-4S] cluster</name>
        <dbReference type="ChEBI" id="CHEBI:49883"/>
    </cofactor>
    <text evidence="1">Binds 2 [4Fe-4S] clusters per monomer.</text>
</comment>
<comment type="pathway">
    <text evidence="1">tRNA modification; tRNA-queuosine biosynthesis.</text>
</comment>
<comment type="subunit">
    <text evidence="1">Monomer.</text>
</comment>
<comment type="subcellular location">
    <subcellularLocation>
        <location evidence="1">Cytoplasm</location>
    </subcellularLocation>
</comment>
<comment type="similarity">
    <text evidence="1">Belongs to the QueG family.</text>
</comment>
<proteinExistence type="inferred from homology"/>
<organism>
    <name type="scientific">Synechocystis sp. (strain ATCC 27184 / PCC 6803 / Kazusa)</name>
    <dbReference type="NCBI Taxonomy" id="1111708"/>
    <lineage>
        <taxon>Bacteria</taxon>
        <taxon>Bacillati</taxon>
        <taxon>Cyanobacteriota</taxon>
        <taxon>Cyanophyceae</taxon>
        <taxon>Synechococcales</taxon>
        <taxon>Merismopediaceae</taxon>
        <taxon>Synechocystis</taxon>
    </lineage>
</organism>
<evidence type="ECO:0000255" key="1">
    <source>
        <dbReference type="HAMAP-Rule" id="MF_00916"/>
    </source>
</evidence>
<name>QUEG_SYNY3</name>
<keyword id="KW-0004">4Fe-4S</keyword>
<keyword id="KW-0963">Cytoplasm</keyword>
<keyword id="KW-0408">Iron</keyword>
<keyword id="KW-0411">Iron-sulfur</keyword>
<keyword id="KW-0479">Metal-binding</keyword>
<keyword id="KW-0560">Oxidoreductase</keyword>
<keyword id="KW-0671">Queuosine biosynthesis</keyword>
<keyword id="KW-1185">Reference proteome</keyword>
<keyword id="KW-0819">tRNA processing</keyword>
<reference key="1">
    <citation type="journal article" date="1996" name="DNA Res.">
        <title>Sequence analysis of the genome of the unicellular cyanobacterium Synechocystis sp. strain PCC6803. II. Sequence determination of the entire genome and assignment of potential protein-coding regions.</title>
        <authorList>
            <person name="Kaneko T."/>
            <person name="Sato S."/>
            <person name="Kotani H."/>
            <person name="Tanaka A."/>
            <person name="Asamizu E."/>
            <person name="Nakamura Y."/>
            <person name="Miyajima N."/>
            <person name="Hirosawa M."/>
            <person name="Sugiura M."/>
            <person name="Sasamoto S."/>
            <person name="Kimura T."/>
            <person name="Hosouchi T."/>
            <person name="Matsuno A."/>
            <person name="Muraki A."/>
            <person name="Nakazaki N."/>
            <person name="Naruo K."/>
            <person name="Okumura S."/>
            <person name="Shimpo S."/>
            <person name="Takeuchi C."/>
            <person name="Wada T."/>
            <person name="Watanabe A."/>
            <person name="Yamada M."/>
            <person name="Yasuda M."/>
            <person name="Tabata S."/>
        </authorList>
    </citation>
    <scope>NUCLEOTIDE SEQUENCE [LARGE SCALE GENOMIC DNA]</scope>
    <source>
        <strain>ATCC 27184 / PCC 6803 / Kazusa</strain>
    </source>
</reference>